<dbReference type="EC" id="3.6.5.-" evidence="1"/>
<dbReference type="EMBL" id="CP000378">
    <property type="protein sequence ID" value="ABF75015.1"/>
    <property type="molecule type" value="Genomic_DNA"/>
</dbReference>
<dbReference type="SMR" id="Q1BZE0"/>
<dbReference type="HOGENOM" id="CLU_011747_2_0_4"/>
<dbReference type="GO" id="GO:0005737">
    <property type="term" value="C:cytoplasm"/>
    <property type="evidence" value="ECO:0007669"/>
    <property type="project" value="UniProtKB-SubCell"/>
</dbReference>
<dbReference type="GO" id="GO:0005525">
    <property type="term" value="F:GTP binding"/>
    <property type="evidence" value="ECO:0007669"/>
    <property type="project" value="UniProtKB-UniRule"/>
</dbReference>
<dbReference type="GO" id="GO:0003924">
    <property type="term" value="F:GTPase activity"/>
    <property type="evidence" value="ECO:0007669"/>
    <property type="project" value="UniProtKB-UniRule"/>
</dbReference>
<dbReference type="GO" id="GO:0000287">
    <property type="term" value="F:magnesium ion binding"/>
    <property type="evidence" value="ECO:0007669"/>
    <property type="project" value="InterPro"/>
</dbReference>
<dbReference type="GO" id="GO:0042254">
    <property type="term" value="P:ribosome biogenesis"/>
    <property type="evidence" value="ECO:0007669"/>
    <property type="project" value="UniProtKB-UniRule"/>
</dbReference>
<dbReference type="CDD" id="cd01898">
    <property type="entry name" value="Obg"/>
    <property type="match status" value="1"/>
</dbReference>
<dbReference type="FunFam" id="2.70.210.12:FF:000001">
    <property type="entry name" value="GTPase Obg"/>
    <property type="match status" value="1"/>
</dbReference>
<dbReference type="Gene3D" id="2.70.210.12">
    <property type="entry name" value="GTP1/OBG domain"/>
    <property type="match status" value="1"/>
</dbReference>
<dbReference type="Gene3D" id="3.40.50.300">
    <property type="entry name" value="P-loop containing nucleotide triphosphate hydrolases"/>
    <property type="match status" value="1"/>
</dbReference>
<dbReference type="HAMAP" id="MF_01454">
    <property type="entry name" value="GTPase_Obg"/>
    <property type="match status" value="1"/>
</dbReference>
<dbReference type="InterPro" id="IPR031167">
    <property type="entry name" value="G_OBG"/>
</dbReference>
<dbReference type="InterPro" id="IPR006073">
    <property type="entry name" value="GTP-bd"/>
</dbReference>
<dbReference type="InterPro" id="IPR014100">
    <property type="entry name" value="GTP-bd_Obg/CgtA"/>
</dbReference>
<dbReference type="InterPro" id="IPR006074">
    <property type="entry name" value="GTP1-OBG_CS"/>
</dbReference>
<dbReference type="InterPro" id="IPR006169">
    <property type="entry name" value="GTP1_OBG_dom"/>
</dbReference>
<dbReference type="InterPro" id="IPR036726">
    <property type="entry name" value="GTP1_OBG_dom_sf"/>
</dbReference>
<dbReference type="InterPro" id="IPR045086">
    <property type="entry name" value="OBG_GTPase"/>
</dbReference>
<dbReference type="InterPro" id="IPR027417">
    <property type="entry name" value="P-loop_NTPase"/>
</dbReference>
<dbReference type="NCBIfam" id="TIGR02729">
    <property type="entry name" value="Obg_CgtA"/>
    <property type="match status" value="1"/>
</dbReference>
<dbReference type="NCBIfam" id="NF008954">
    <property type="entry name" value="PRK12296.1"/>
    <property type="match status" value="1"/>
</dbReference>
<dbReference type="NCBIfam" id="NF008955">
    <property type="entry name" value="PRK12297.1"/>
    <property type="match status" value="1"/>
</dbReference>
<dbReference type="NCBIfam" id="NF008956">
    <property type="entry name" value="PRK12299.1"/>
    <property type="match status" value="1"/>
</dbReference>
<dbReference type="PANTHER" id="PTHR11702">
    <property type="entry name" value="DEVELOPMENTALLY REGULATED GTP-BINDING PROTEIN-RELATED"/>
    <property type="match status" value="1"/>
</dbReference>
<dbReference type="PANTHER" id="PTHR11702:SF31">
    <property type="entry name" value="MITOCHONDRIAL RIBOSOME-ASSOCIATED GTPASE 2"/>
    <property type="match status" value="1"/>
</dbReference>
<dbReference type="Pfam" id="PF01018">
    <property type="entry name" value="GTP1_OBG"/>
    <property type="match status" value="1"/>
</dbReference>
<dbReference type="Pfam" id="PF01926">
    <property type="entry name" value="MMR_HSR1"/>
    <property type="match status" value="1"/>
</dbReference>
<dbReference type="PIRSF" id="PIRSF002401">
    <property type="entry name" value="GTP_bd_Obg/CgtA"/>
    <property type="match status" value="1"/>
</dbReference>
<dbReference type="PRINTS" id="PR00326">
    <property type="entry name" value="GTP1OBG"/>
</dbReference>
<dbReference type="SUPFAM" id="SSF82051">
    <property type="entry name" value="Obg GTP-binding protein N-terminal domain"/>
    <property type="match status" value="1"/>
</dbReference>
<dbReference type="SUPFAM" id="SSF52540">
    <property type="entry name" value="P-loop containing nucleoside triphosphate hydrolases"/>
    <property type="match status" value="1"/>
</dbReference>
<dbReference type="PROSITE" id="PS51710">
    <property type="entry name" value="G_OBG"/>
    <property type="match status" value="1"/>
</dbReference>
<dbReference type="PROSITE" id="PS00905">
    <property type="entry name" value="GTP1_OBG"/>
    <property type="match status" value="1"/>
</dbReference>
<dbReference type="PROSITE" id="PS51883">
    <property type="entry name" value="OBG"/>
    <property type="match status" value="1"/>
</dbReference>
<evidence type="ECO:0000255" key="1">
    <source>
        <dbReference type="HAMAP-Rule" id="MF_01454"/>
    </source>
</evidence>
<evidence type="ECO:0000255" key="2">
    <source>
        <dbReference type="PROSITE-ProRule" id="PRU01231"/>
    </source>
</evidence>
<evidence type="ECO:0000256" key="3">
    <source>
        <dbReference type="SAM" id="MobiDB-lite"/>
    </source>
</evidence>
<gene>
    <name evidence="1" type="primary">obg</name>
    <name type="ordered locus">Bcen_0101</name>
</gene>
<accession>Q1BZE0</accession>
<name>OBG_BURO1</name>
<sequence>MKFIDEARIEVIAGDGGDGSASMRREKFVPFGGPDGGDGGRGGSVYAIADRNINTLIDYRYAKKHLARNGENGRGSDCYGKGGDDVTLRMPVGTIISDMDTGELIADLTEHDQRVMLAQGGAGGLGNLHFKSSTNRAPRQKTDGKPGERRMLKLELKVLADVGLLGMPNAGKSTFISSVSNAKPKIADYPFTTLAPNLGVVRVGPSKSFVIADIPGLIEGAAEGAGLGHQFLRHLQRTGVLLHLVDLAPFDESVDPVAEATAIVGELRKYDEALYEKPRWLVLNKLDMVPEDEREARVADFLDRFGWDGPVFEISALTGQGCEALCYAIYDYLSEHSDAHRAAEAEDLAADVRFRDAPPAKGGATPGDDA</sequence>
<comment type="function">
    <text evidence="1">An essential GTPase which binds GTP, GDP and possibly (p)ppGpp with moderate affinity, with high nucleotide exchange rates and a fairly low GTP hydrolysis rate. Plays a role in control of the cell cycle, stress response, ribosome biogenesis and in those bacteria that undergo differentiation, in morphogenesis control.</text>
</comment>
<comment type="cofactor">
    <cofactor evidence="1">
        <name>Mg(2+)</name>
        <dbReference type="ChEBI" id="CHEBI:18420"/>
    </cofactor>
</comment>
<comment type="subunit">
    <text evidence="1">Monomer.</text>
</comment>
<comment type="subcellular location">
    <subcellularLocation>
        <location evidence="1">Cytoplasm</location>
    </subcellularLocation>
</comment>
<comment type="similarity">
    <text evidence="1">Belongs to the TRAFAC class OBG-HflX-like GTPase superfamily. OBG GTPase family.</text>
</comment>
<proteinExistence type="inferred from homology"/>
<protein>
    <recommendedName>
        <fullName evidence="1">GTPase Obg</fullName>
        <ecNumber evidence="1">3.6.5.-</ecNumber>
    </recommendedName>
    <alternativeName>
        <fullName evidence="1">GTP-binding protein Obg</fullName>
    </alternativeName>
</protein>
<feature type="chain" id="PRO_0000385778" description="GTPase Obg">
    <location>
        <begin position="1"/>
        <end position="370"/>
    </location>
</feature>
<feature type="domain" description="Obg" evidence="2">
    <location>
        <begin position="1"/>
        <end position="159"/>
    </location>
</feature>
<feature type="domain" description="OBG-type G" evidence="1">
    <location>
        <begin position="160"/>
        <end position="334"/>
    </location>
</feature>
<feature type="region of interest" description="Disordered" evidence="3">
    <location>
        <begin position="128"/>
        <end position="147"/>
    </location>
</feature>
<feature type="binding site" evidence="1">
    <location>
        <begin position="166"/>
        <end position="173"/>
    </location>
    <ligand>
        <name>GTP</name>
        <dbReference type="ChEBI" id="CHEBI:37565"/>
    </ligand>
</feature>
<feature type="binding site" evidence="1">
    <location>
        <position position="173"/>
    </location>
    <ligand>
        <name>Mg(2+)</name>
        <dbReference type="ChEBI" id="CHEBI:18420"/>
    </ligand>
</feature>
<feature type="binding site" evidence="1">
    <location>
        <begin position="191"/>
        <end position="195"/>
    </location>
    <ligand>
        <name>GTP</name>
        <dbReference type="ChEBI" id="CHEBI:37565"/>
    </ligand>
</feature>
<feature type="binding site" evidence="1">
    <location>
        <position position="193"/>
    </location>
    <ligand>
        <name>Mg(2+)</name>
        <dbReference type="ChEBI" id="CHEBI:18420"/>
    </ligand>
</feature>
<feature type="binding site" evidence="1">
    <location>
        <begin position="213"/>
        <end position="216"/>
    </location>
    <ligand>
        <name>GTP</name>
        <dbReference type="ChEBI" id="CHEBI:37565"/>
    </ligand>
</feature>
<feature type="binding site" evidence="1">
    <location>
        <begin position="284"/>
        <end position="287"/>
    </location>
    <ligand>
        <name>GTP</name>
        <dbReference type="ChEBI" id="CHEBI:37565"/>
    </ligand>
</feature>
<feature type="binding site" evidence="1">
    <location>
        <begin position="315"/>
        <end position="317"/>
    </location>
    <ligand>
        <name>GTP</name>
        <dbReference type="ChEBI" id="CHEBI:37565"/>
    </ligand>
</feature>
<keyword id="KW-0963">Cytoplasm</keyword>
<keyword id="KW-0342">GTP-binding</keyword>
<keyword id="KW-0378">Hydrolase</keyword>
<keyword id="KW-0460">Magnesium</keyword>
<keyword id="KW-0479">Metal-binding</keyword>
<keyword id="KW-0547">Nucleotide-binding</keyword>
<reference key="1">
    <citation type="submission" date="2006-05" db="EMBL/GenBank/DDBJ databases">
        <title>Complete sequence of chromosome 1 of Burkholderia cenocepacia AU 1054.</title>
        <authorList>
            <consortium name="US DOE Joint Genome Institute"/>
            <person name="Copeland A."/>
            <person name="Lucas S."/>
            <person name="Lapidus A."/>
            <person name="Barry K."/>
            <person name="Detter J.C."/>
            <person name="Glavina del Rio T."/>
            <person name="Hammon N."/>
            <person name="Israni S."/>
            <person name="Dalin E."/>
            <person name="Tice H."/>
            <person name="Pitluck S."/>
            <person name="Chain P."/>
            <person name="Malfatti S."/>
            <person name="Shin M."/>
            <person name="Vergez L."/>
            <person name="Schmutz J."/>
            <person name="Larimer F."/>
            <person name="Land M."/>
            <person name="Hauser L."/>
            <person name="Kyrpides N."/>
            <person name="Lykidis A."/>
            <person name="LiPuma J.J."/>
            <person name="Konstantinidis K."/>
            <person name="Tiedje J.M."/>
            <person name="Richardson P."/>
        </authorList>
    </citation>
    <scope>NUCLEOTIDE SEQUENCE [LARGE SCALE GENOMIC DNA]</scope>
    <source>
        <strain>AU 1054</strain>
    </source>
</reference>
<organism>
    <name type="scientific">Burkholderia orbicola (strain AU 1054)</name>
    <dbReference type="NCBI Taxonomy" id="331271"/>
    <lineage>
        <taxon>Bacteria</taxon>
        <taxon>Pseudomonadati</taxon>
        <taxon>Pseudomonadota</taxon>
        <taxon>Betaproteobacteria</taxon>
        <taxon>Burkholderiales</taxon>
        <taxon>Burkholderiaceae</taxon>
        <taxon>Burkholderia</taxon>
        <taxon>Burkholderia cepacia complex</taxon>
        <taxon>Burkholderia orbicola</taxon>
    </lineage>
</organism>